<evidence type="ECO:0000255" key="1">
    <source>
        <dbReference type="HAMAP-Rule" id="MF_00405"/>
    </source>
</evidence>
<proteinExistence type="inferred from homology"/>
<protein>
    <recommendedName>
        <fullName evidence="1">3-hydroxydecanoyl-[acyl-carrier-protein] dehydratase</fullName>
        <ecNumber evidence="1">4.2.1.59</ecNumber>
    </recommendedName>
    <alternativeName>
        <fullName evidence="1">3-hydroxyacyl-[acyl-carrier-protein] dehydratase FabA</fullName>
    </alternativeName>
    <alternativeName>
        <fullName evidence="1">Beta-hydroxydecanoyl thioester dehydrase</fullName>
    </alternativeName>
    <alternativeName>
        <fullName evidence="1">Trans-2-decenoyl-[acyl-carrier-protein] isomerase</fullName>
        <ecNumber evidence="1">5.3.3.14</ecNumber>
    </alternativeName>
</protein>
<dbReference type="EC" id="4.2.1.59" evidence="1"/>
<dbReference type="EC" id="5.3.3.14" evidence="1"/>
<dbReference type="EMBL" id="CP000746">
    <property type="protein sequence ID" value="ABR74802.1"/>
    <property type="molecule type" value="Genomic_DNA"/>
</dbReference>
<dbReference type="RefSeq" id="WP_012073179.1">
    <property type="nucleotide sequence ID" value="NC_009655.1"/>
</dbReference>
<dbReference type="SMR" id="A6VPA5"/>
<dbReference type="STRING" id="339671.Asuc_1443"/>
<dbReference type="KEGG" id="asu:Asuc_1443"/>
<dbReference type="eggNOG" id="COG0764">
    <property type="taxonomic scope" value="Bacteria"/>
</dbReference>
<dbReference type="HOGENOM" id="CLU_097925_0_0_6"/>
<dbReference type="OrthoDB" id="9786735at2"/>
<dbReference type="UniPathway" id="UPA00094"/>
<dbReference type="Proteomes" id="UP000001114">
    <property type="component" value="Chromosome"/>
</dbReference>
<dbReference type="GO" id="GO:0005737">
    <property type="term" value="C:cytoplasm"/>
    <property type="evidence" value="ECO:0007669"/>
    <property type="project" value="UniProtKB-SubCell"/>
</dbReference>
<dbReference type="GO" id="GO:0019171">
    <property type="term" value="F:(3R)-hydroxyacyl-[acyl-carrier-protein] dehydratase activity"/>
    <property type="evidence" value="ECO:0007669"/>
    <property type="project" value="UniProtKB-UniRule"/>
</dbReference>
<dbReference type="GO" id="GO:0034017">
    <property type="term" value="F:trans-2-decenoyl-acyl-carrier-protein isomerase activity"/>
    <property type="evidence" value="ECO:0007669"/>
    <property type="project" value="UniProtKB-UniRule"/>
</dbReference>
<dbReference type="GO" id="GO:0006636">
    <property type="term" value="P:unsaturated fatty acid biosynthetic process"/>
    <property type="evidence" value="ECO:0007669"/>
    <property type="project" value="UniProtKB-UniRule"/>
</dbReference>
<dbReference type="CDD" id="cd01287">
    <property type="entry name" value="FabA"/>
    <property type="match status" value="1"/>
</dbReference>
<dbReference type="FunFam" id="3.10.129.10:FF:000003">
    <property type="entry name" value="3-hydroxydecanoyl-[acyl-carrier-protein] dehydratase"/>
    <property type="match status" value="1"/>
</dbReference>
<dbReference type="Gene3D" id="3.10.129.10">
    <property type="entry name" value="Hotdog Thioesterase"/>
    <property type="match status" value="1"/>
</dbReference>
<dbReference type="HAMAP" id="MF_00405">
    <property type="entry name" value="FabA"/>
    <property type="match status" value="1"/>
</dbReference>
<dbReference type="InterPro" id="IPR010083">
    <property type="entry name" value="FabA"/>
</dbReference>
<dbReference type="InterPro" id="IPR013114">
    <property type="entry name" value="FabA_FabZ"/>
</dbReference>
<dbReference type="InterPro" id="IPR029069">
    <property type="entry name" value="HotDog_dom_sf"/>
</dbReference>
<dbReference type="NCBIfam" id="TIGR01749">
    <property type="entry name" value="fabA"/>
    <property type="match status" value="1"/>
</dbReference>
<dbReference type="NCBIfam" id="NF003509">
    <property type="entry name" value="PRK05174.1"/>
    <property type="match status" value="1"/>
</dbReference>
<dbReference type="PANTHER" id="PTHR30272">
    <property type="entry name" value="3-HYDROXYACYL-[ACYL-CARRIER-PROTEIN] DEHYDRATASE"/>
    <property type="match status" value="1"/>
</dbReference>
<dbReference type="PANTHER" id="PTHR30272:SF8">
    <property type="entry name" value="3-HYDROXYDECANOYL-[ACYL-CARRIER-PROTEIN] DEHYDRATASE"/>
    <property type="match status" value="1"/>
</dbReference>
<dbReference type="Pfam" id="PF07977">
    <property type="entry name" value="FabA"/>
    <property type="match status" value="1"/>
</dbReference>
<dbReference type="SUPFAM" id="SSF54637">
    <property type="entry name" value="Thioesterase/thiol ester dehydrase-isomerase"/>
    <property type="match status" value="1"/>
</dbReference>
<gene>
    <name evidence="1" type="primary">fabA</name>
    <name type="ordered locus">Asuc_1443</name>
</gene>
<feature type="chain" id="PRO_1000072262" description="3-hydroxydecanoyl-[acyl-carrier-protein] dehydratase">
    <location>
        <begin position="1"/>
        <end position="177"/>
    </location>
</feature>
<feature type="active site" evidence="1">
    <location>
        <position position="76"/>
    </location>
</feature>
<name>FABA_ACTSZ</name>
<keyword id="KW-0963">Cytoplasm</keyword>
<keyword id="KW-0275">Fatty acid biosynthesis</keyword>
<keyword id="KW-0276">Fatty acid metabolism</keyword>
<keyword id="KW-0413">Isomerase</keyword>
<keyword id="KW-0444">Lipid biosynthesis</keyword>
<keyword id="KW-0443">Lipid metabolism</keyword>
<keyword id="KW-0456">Lyase</keyword>
<keyword id="KW-1185">Reference proteome</keyword>
<sequence>MTNTCTPNHKSSYTYEDLLASGRGELFGPKGPQLPAPTMLMMDRVIEMNETGGQYGKGYVEAELDIKPDLFFFGCHFIGDPVMPGCLGLDAMWQLVGFYLGWIGGEGKGRALGVGEVKFTGQVLPTAKKVTYRIHLKRVINRKLIMGVADGEVEVDGRVIYTATDLKVGLFQDTSTF</sequence>
<reference key="1">
    <citation type="journal article" date="2010" name="BMC Genomics">
        <title>A genomic perspective on the potential of Actinobacillus succinogenes for industrial succinate production.</title>
        <authorList>
            <person name="McKinlay J.B."/>
            <person name="Laivenieks M."/>
            <person name="Schindler B.D."/>
            <person name="McKinlay A.A."/>
            <person name="Siddaramappa S."/>
            <person name="Challacombe J.F."/>
            <person name="Lowry S.R."/>
            <person name="Clum A."/>
            <person name="Lapidus A.L."/>
            <person name="Burkhart K.B."/>
            <person name="Harkins V."/>
            <person name="Vieille C."/>
        </authorList>
    </citation>
    <scope>NUCLEOTIDE SEQUENCE [LARGE SCALE GENOMIC DNA]</scope>
    <source>
        <strain>ATCC 55618 / DSM 22257 / CCUG 43843 / 130Z</strain>
    </source>
</reference>
<accession>A6VPA5</accession>
<organism>
    <name type="scientific">Actinobacillus succinogenes (strain ATCC 55618 / DSM 22257 / CCUG 43843 / 130Z)</name>
    <dbReference type="NCBI Taxonomy" id="339671"/>
    <lineage>
        <taxon>Bacteria</taxon>
        <taxon>Pseudomonadati</taxon>
        <taxon>Pseudomonadota</taxon>
        <taxon>Gammaproteobacteria</taxon>
        <taxon>Pasteurellales</taxon>
        <taxon>Pasteurellaceae</taxon>
        <taxon>Actinobacillus</taxon>
    </lineage>
</organism>
<comment type="function">
    <text evidence="1">Necessary for the introduction of cis unsaturation into fatty acids. Catalyzes the dehydration of (3R)-3-hydroxydecanoyl-ACP to E-(2)-decenoyl-ACP and then its isomerization to Z-(3)-decenoyl-ACP. Can catalyze the dehydratase reaction for beta-hydroxyacyl-ACPs with saturated chain lengths up to 16:0, being most active on intermediate chain length.</text>
</comment>
<comment type="catalytic activity">
    <reaction evidence="1">
        <text>a (3R)-hydroxyacyl-[ACP] = a (2E)-enoyl-[ACP] + H2O</text>
        <dbReference type="Rhea" id="RHEA:13097"/>
        <dbReference type="Rhea" id="RHEA-COMP:9925"/>
        <dbReference type="Rhea" id="RHEA-COMP:9945"/>
        <dbReference type="ChEBI" id="CHEBI:15377"/>
        <dbReference type="ChEBI" id="CHEBI:78784"/>
        <dbReference type="ChEBI" id="CHEBI:78827"/>
        <dbReference type="EC" id="4.2.1.59"/>
    </reaction>
</comment>
<comment type="catalytic activity">
    <reaction evidence="1">
        <text>(3R)-hydroxydecanoyl-[ACP] = (2E)-decenoyl-[ACP] + H2O</text>
        <dbReference type="Rhea" id="RHEA:41860"/>
        <dbReference type="Rhea" id="RHEA-COMP:9638"/>
        <dbReference type="Rhea" id="RHEA-COMP:9639"/>
        <dbReference type="ChEBI" id="CHEBI:15377"/>
        <dbReference type="ChEBI" id="CHEBI:78466"/>
        <dbReference type="ChEBI" id="CHEBI:78467"/>
    </reaction>
</comment>
<comment type="catalytic activity">
    <reaction evidence="1">
        <text>(2E)-decenoyl-[ACP] = (3Z)-decenoyl-[ACP]</text>
        <dbReference type="Rhea" id="RHEA:23568"/>
        <dbReference type="Rhea" id="RHEA-COMP:9639"/>
        <dbReference type="Rhea" id="RHEA-COMP:9927"/>
        <dbReference type="ChEBI" id="CHEBI:78467"/>
        <dbReference type="ChEBI" id="CHEBI:78798"/>
        <dbReference type="EC" id="5.3.3.14"/>
    </reaction>
</comment>
<comment type="pathway">
    <text evidence="1">Lipid metabolism; fatty acid biosynthesis.</text>
</comment>
<comment type="subunit">
    <text evidence="1">Homodimer.</text>
</comment>
<comment type="subcellular location">
    <subcellularLocation>
        <location evidence="1">Cytoplasm</location>
    </subcellularLocation>
</comment>
<comment type="similarity">
    <text evidence="1">Belongs to the thioester dehydratase family. FabA subfamily.</text>
</comment>